<feature type="chain" id="PRO_1000085318" description="Chaperone protein DnaJ">
    <location>
        <begin position="1"/>
        <end position="377"/>
    </location>
</feature>
<feature type="domain" description="J" evidence="1">
    <location>
        <begin position="5"/>
        <end position="70"/>
    </location>
</feature>
<feature type="repeat" description="CXXCXGXG motif">
    <location>
        <begin position="151"/>
        <end position="158"/>
    </location>
</feature>
<feature type="repeat" description="CXXCXGXG motif">
    <location>
        <begin position="167"/>
        <end position="174"/>
    </location>
</feature>
<feature type="repeat" description="CXXCXGXG motif">
    <location>
        <begin position="189"/>
        <end position="196"/>
    </location>
</feature>
<feature type="repeat" description="CXXCXGXG motif">
    <location>
        <begin position="203"/>
        <end position="210"/>
    </location>
</feature>
<feature type="zinc finger region" description="CR-type" evidence="1">
    <location>
        <begin position="138"/>
        <end position="215"/>
    </location>
</feature>
<feature type="binding site" evidence="1">
    <location>
        <position position="151"/>
    </location>
    <ligand>
        <name>Zn(2+)</name>
        <dbReference type="ChEBI" id="CHEBI:29105"/>
        <label>1</label>
    </ligand>
</feature>
<feature type="binding site" evidence="1">
    <location>
        <position position="154"/>
    </location>
    <ligand>
        <name>Zn(2+)</name>
        <dbReference type="ChEBI" id="CHEBI:29105"/>
        <label>1</label>
    </ligand>
</feature>
<feature type="binding site" evidence="1">
    <location>
        <position position="167"/>
    </location>
    <ligand>
        <name>Zn(2+)</name>
        <dbReference type="ChEBI" id="CHEBI:29105"/>
        <label>2</label>
    </ligand>
</feature>
<feature type="binding site" evidence="1">
    <location>
        <position position="170"/>
    </location>
    <ligand>
        <name>Zn(2+)</name>
        <dbReference type="ChEBI" id="CHEBI:29105"/>
        <label>2</label>
    </ligand>
</feature>
<feature type="binding site" evidence="1">
    <location>
        <position position="189"/>
    </location>
    <ligand>
        <name>Zn(2+)</name>
        <dbReference type="ChEBI" id="CHEBI:29105"/>
        <label>2</label>
    </ligand>
</feature>
<feature type="binding site" evidence="1">
    <location>
        <position position="192"/>
    </location>
    <ligand>
        <name>Zn(2+)</name>
        <dbReference type="ChEBI" id="CHEBI:29105"/>
        <label>2</label>
    </ligand>
</feature>
<feature type="binding site" evidence="1">
    <location>
        <position position="203"/>
    </location>
    <ligand>
        <name>Zn(2+)</name>
        <dbReference type="ChEBI" id="CHEBI:29105"/>
        <label>1</label>
    </ligand>
</feature>
<feature type="binding site" evidence="1">
    <location>
        <position position="206"/>
    </location>
    <ligand>
        <name>Zn(2+)</name>
        <dbReference type="ChEBI" id="CHEBI:29105"/>
        <label>1</label>
    </ligand>
</feature>
<proteinExistence type="inferred from homology"/>
<gene>
    <name evidence="1" type="primary">dnaJ</name>
    <name type="ordered locus">SUN_1879</name>
</gene>
<reference key="1">
    <citation type="journal article" date="2007" name="Proc. Natl. Acad. Sci. U.S.A.">
        <title>Deep-sea vent epsilon-proteobacterial genomes provide insights into emergence of pathogens.</title>
        <authorList>
            <person name="Nakagawa S."/>
            <person name="Takaki Y."/>
            <person name="Shimamura S."/>
            <person name="Reysenbach A.-L."/>
            <person name="Takai K."/>
            <person name="Horikoshi K."/>
        </authorList>
    </citation>
    <scope>NUCLEOTIDE SEQUENCE [LARGE SCALE GENOMIC DNA]</scope>
    <source>
        <strain>NBC37-1</strain>
    </source>
</reference>
<evidence type="ECO:0000255" key="1">
    <source>
        <dbReference type="HAMAP-Rule" id="MF_01152"/>
    </source>
</evidence>
<organism>
    <name type="scientific">Sulfurovum sp. (strain NBC37-1)</name>
    <dbReference type="NCBI Taxonomy" id="387093"/>
    <lineage>
        <taxon>Bacteria</taxon>
        <taxon>Pseudomonadati</taxon>
        <taxon>Campylobacterota</taxon>
        <taxon>Epsilonproteobacteria</taxon>
        <taxon>Campylobacterales</taxon>
        <taxon>Sulfurovaceae</taxon>
        <taxon>Sulfurovum</taxon>
    </lineage>
</organism>
<sequence>MSEMDYYEVLEVSRDCSGAELKKAYRKLALKYHPDRNPDDQEAEEKFKIVNEAYQVLSDDEKRTIYDRYGKEGLEGQGMGGGFGGANMDDIMDIFNSMFGGGGGGFGGFGRTRRDPSQKYALDFEIELPLAFNEAVFGCEKKIDITYKTPCEECGGTGAKDGKMETCDYCGGQGQVLMRQGPMQFAQTCPKCHGEGRKIAQKCPSCQGKGYHEETETVTIKVPAGVDSGNRLRVPGHGNEAKNGQRGDLYLTFYVEEDEHFIRNGNDIYIEVPVFFTQAILGETISIPTLDGELELELKQSTKDKEQFIFEGEGVPDVHNGRKGRLIAQVRMILPKKINEEQKELLEKLQESYGVESRPHKSTFESAFDKVKNWFKN</sequence>
<name>DNAJ_SULNB</name>
<comment type="function">
    <text evidence="1">Participates actively in the response to hyperosmotic and heat shock by preventing the aggregation of stress-denatured proteins and by disaggregating proteins, also in an autonomous, DnaK-independent fashion. Unfolded proteins bind initially to DnaJ; upon interaction with the DnaJ-bound protein, DnaK hydrolyzes its bound ATP, resulting in the formation of a stable complex. GrpE releases ADP from DnaK; ATP binding to DnaK triggers the release of the substrate protein, thus completing the reaction cycle. Several rounds of ATP-dependent interactions between DnaJ, DnaK and GrpE are required for fully efficient folding. Also involved, together with DnaK and GrpE, in the DNA replication of plasmids through activation of initiation proteins.</text>
</comment>
<comment type="cofactor">
    <cofactor evidence="1">
        <name>Zn(2+)</name>
        <dbReference type="ChEBI" id="CHEBI:29105"/>
    </cofactor>
    <text evidence="1">Binds 2 Zn(2+) ions per monomer.</text>
</comment>
<comment type="subunit">
    <text evidence="1">Homodimer.</text>
</comment>
<comment type="subcellular location">
    <subcellularLocation>
        <location evidence="1">Cytoplasm</location>
    </subcellularLocation>
</comment>
<comment type="domain">
    <text evidence="1">The J domain is necessary and sufficient to stimulate DnaK ATPase activity. Zinc center 1 plays an important role in the autonomous, DnaK-independent chaperone activity of DnaJ. Zinc center 2 is essential for interaction with DnaK and for DnaJ activity.</text>
</comment>
<comment type="similarity">
    <text evidence="1">Belongs to the DnaJ family.</text>
</comment>
<keyword id="KW-0143">Chaperone</keyword>
<keyword id="KW-0963">Cytoplasm</keyword>
<keyword id="KW-0235">DNA replication</keyword>
<keyword id="KW-0479">Metal-binding</keyword>
<keyword id="KW-0677">Repeat</keyword>
<keyword id="KW-0346">Stress response</keyword>
<keyword id="KW-0862">Zinc</keyword>
<keyword id="KW-0863">Zinc-finger</keyword>
<accession>A6QBG7</accession>
<dbReference type="EMBL" id="AP009179">
    <property type="protein sequence ID" value="BAF72826.1"/>
    <property type="molecule type" value="Genomic_DNA"/>
</dbReference>
<dbReference type="RefSeq" id="WP_012083639.1">
    <property type="nucleotide sequence ID" value="NC_009663.1"/>
</dbReference>
<dbReference type="SMR" id="A6QBG7"/>
<dbReference type="STRING" id="387093.SUN_1879"/>
<dbReference type="KEGG" id="sun:SUN_1879"/>
<dbReference type="eggNOG" id="COG0484">
    <property type="taxonomic scope" value="Bacteria"/>
</dbReference>
<dbReference type="HOGENOM" id="CLU_017633_0_7_7"/>
<dbReference type="OrthoDB" id="9779889at2"/>
<dbReference type="Proteomes" id="UP000006378">
    <property type="component" value="Chromosome"/>
</dbReference>
<dbReference type="GO" id="GO:0005737">
    <property type="term" value="C:cytoplasm"/>
    <property type="evidence" value="ECO:0007669"/>
    <property type="project" value="UniProtKB-SubCell"/>
</dbReference>
<dbReference type="GO" id="GO:0005524">
    <property type="term" value="F:ATP binding"/>
    <property type="evidence" value="ECO:0007669"/>
    <property type="project" value="InterPro"/>
</dbReference>
<dbReference type="GO" id="GO:0031072">
    <property type="term" value="F:heat shock protein binding"/>
    <property type="evidence" value="ECO:0007669"/>
    <property type="project" value="InterPro"/>
</dbReference>
<dbReference type="GO" id="GO:0051082">
    <property type="term" value="F:unfolded protein binding"/>
    <property type="evidence" value="ECO:0007669"/>
    <property type="project" value="UniProtKB-UniRule"/>
</dbReference>
<dbReference type="GO" id="GO:0008270">
    <property type="term" value="F:zinc ion binding"/>
    <property type="evidence" value="ECO:0007669"/>
    <property type="project" value="UniProtKB-UniRule"/>
</dbReference>
<dbReference type="GO" id="GO:0051085">
    <property type="term" value="P:chaperone cofactor-dependent protein refolding"/>
    <property type="evidence" value="ECO:0007669"/>
    <property type="project" value="TreeGrafter"/>
</dbReference>
<dbReference type="GO" id="GO:0006260">
    <property type="term" value="P:DNA replication"/>
    <property type="evidence" value="ECO:0007669"/>
    <property type="project" value="UniProtKB-KW"/>
</dbReference>
<dbReference type="GO" id="GO:0042026">
    <property type="term" value="P:protein refolding"/>
    <property type="evidence" value="ECO:0007669"/>
    <property type="project" value="TreeGrafter"/>
</dbReference>
<dbReference type="GO" id="GO:0009408">
    <property type="term" value="P:response to heat"/>
    <property type="evidence" value="ECO:0007669"/>
    <property type="project" value="InterPro"/>
</dbReference>
<dbReference type="CDD" id="cd06257">
    <property type="entry name" value="DnaJ"/>
    <property type="match status" value="1"/>
</dbReference>
<dbReference type="CDD" id="cd10747">
    <property type="entry name" value="DnaJ_C"/>
    <property type="match status" value="1"/>
</dbReference>
<dbReference type="CDD" id="cd10719">
    <property type="entry name" value="DnaJ_zf"/>
    <property type="match status" value="1"/>
</dbReference>
<dbReference type="FunFam" id="1.10.287.110:FF:000034">
    <property type="entry name" value="Chaperone protein DnaJ"/>
    <property type="match status" value="1"/>
</dbReference>
<dbReference type="FunFam" id="2.60.260.20:FF:000013">
    <property type="entry name" value="DnaJ subfamily B member 11"/>
    <property type="match status" value="1"/>
</dbReference>
<dbReference type="FunFam" id="2.10.230.10:FF:000002">
    <property type="entry name" value="Molecular chaperone DnaJ"/>
    <property type="match status" value="1"/>
</dbReference>
<dbReference type="Gene3D" id="1.10.287.110">
    <property type="entry name" value="DnaJ domain"/>
    <property type="match status" value="1"/>
</dbReference>
<dbReference type="Gene3D" id="2.10.230.10">
    <property type="entry name" value="Heat shock protein DnaJ, cysteine-rich domain"/>
    <property type="match status" value="1"/>
</dbReference>
<dbReference type="Gene3D" id="2.60.260.20">
    <property type="entry name" value="Urease metallochaperone UreE, N-terminal domain"/>
    <property type="match status" value="2"/>
</dbReference>
<dbReference type="HAMAP" id="MF_01152">
    <property type="entry name" value="DnaJ"/>
    <property type="match status" value="1"/>
</dbReference>
<dbReference type="InterPro" id="IPR012724">
    <property type="entry name" value="DnaJ"/>
</dbReference>
<dbReference type="InterPro" id="IPR002939">
    <property type="entry name" value="DnaJ_C"/>
</dbReference>
<dbReference type="InterPro" id="IPR001623">
    <property type="entry name" value="DnaJ_domain"/>
</dbReference>
<dbReference type="InterPro" id="IPR018253">
    <property type="entry name" value="DnaJ_domain_CS"/>
</dbReference>
<dbReference type="InterPro" id="IPR008971">
    <property type="entry name" value="HSP40/DnaJ_pept-bd"/>
</dbReference>
<dbReference type="InterPro" id="IPR001305">
    <property type="entry name" value="HSP_DnaJ_Cys-rich_dom"/>
</dbReference>
<dbReference type="InterPro" id="IPR036410">
    <property type="entry name" value="HSP_DnaJ_Cys-rich_dom_sf"/>
</dbReference>
<dbReference type="InterPro" id="IPR036869">
    <property type="entry name" value="J_dom_sf"/>
</dbReference>
<dbReference type="NCBIfam" id="TIGR02349">
    <property type="entry name" value="DnaJ_bact"/>
    <property type="match status" value="1"/>
</dbReference>
<dbReference type="NCBIfam" id="NF008035">
    <property type="entry name" value="PRK10767.1"/>
    <property type="match status" value="1"/>
</dbReference>
<dbReference type="PANTHER" id="PTHR43096:SF48">
    <property type="entry name" value="CHAPERONE PROTEIN DNAJ"/>
    <property type="match status" value="1"/>
</dbReference>
<dbReference type="PANTHER" id="PTHR43096">
    <property type="entry name" value="DNAJ HOMOLOG 1, MITOCHONDRIAL-RELATED"/>
    <property type="match status" value="1"/>
</dbReference>
<dbReference type="Pfam" id="PF00226">
    <property type="entry name" value="DnaJ"/>
    <property type="match status" value="1"/>
</dbReference>
<dbReference type="Pfam" id="PF01556">
    <property type="entry name" value="DnaJ_C"/>
    <property type="match status" value="1"/>
</dbReference>
<dbReference type="Pfam" id="PF00684">
    <property type="entry name" value="DnaJ_CXXCXGXG"/>
    <property type="match status" value="1"/>
</dbReference>
<dbReference type="PRINTS" id="PR00625">
    <property type="entry name" value="JDOMAIN"/>
</dbReference>
<dbReference type="SMART" id="SM00271">
    <property type="entry name" value="DnaJ"/>
    <property type="match status" value="1"/>
</dbReference>
<dbReference type="SUPFAM" id="SSF46565">
    <property type="entry name" value="Chaperone J-domain"/>
    <property type="match status" value="1"/>
</dbReference>
<dbReference type="SUPFAM" id="SSF57938">
    <property type="entry name" value="DnaJ/Hsp40 cysteine-rich domain"/>
    <property type="match status" value="1"/>
</dbReference>
<dbReference type="SUPFAM" id="SSF49493">
    <property type="entry name" value="HSP40/DnaJ peptide-binding domain"/>
    <property type="match status" value="2"/>
</dbReference>
<dbReference type="PROSITE" id="PS00636">
    <property type="entry name" value="DNAJ_1"/>
    <property type="match status" value="1"/>
</dbReference>
<dbReference type="PROSITE" id="PS50076">
    <property type="entry name" value="DNAJ_2"/>
    <property type="match status" value="1"/>
</dbReference>
<dbReference type="PROSITE" id="PS51188">
    <property type="entry name" value="ZF_CR"/>
    <property type="match status" value="1"/>
</dbReference>
<protein>
    <recommendedName>
        <fullName evidence="1">Chaperone protein DnaJ</fullName>
    </recommendedName>
</protein>